<comment type="function">
    <text evidence="2">Component of the ubiquinol-cytochrome c reductase complex (complex III or cytochrome b-c1 complex) that is part of the mitochondrial respiratory chain. The b-c1 complex mediates electron transfer from ubiquinol to cytochrome c. Contributes to the generation of a proton gradient across the mitochondrial membrane that is then used for ATP synthesis.</text>
</comment>
<comment type="cofactor">
    <cofactor evidence="2">
        <name>heme b</name>
        <dbReference type="ChEBI" id="CHEBI:60344"/>
    </cofactor>
    <text evidence="2">Binds 2 heme b groups non-covalently.</text>
</comment>
<comment type="subunit">
    <text evidence="2">The cytochrome bc1 complex contains 11 subunits: 3 respiratory subunits (MT-CYB, CYC1 and UQCRFS1), 2 core proteins (UQCRC1 and UQCRC2) and 6 low-molecular weight proteins (UQCRH/QCR6, UQCRB/QCR7, UQCRQ/QCR8, UQCR10/QCR9, UQCR11/QCR10 and a cleavage product of UQCRFS1). This cytochrome bc1 complex then forms a dimer.</text>
</comment>
<comment type="subcellular location">
    <subcellularLocation>
        <location evidence="2">Mitochondrion inner membrane</location>
        <topology evidence="2">Multi-pass membrane protein</topology>
    </subcellularLocation>
</comment>
<comment type="miscellaneous">
    <text evidence="1">Heme 1 (or BL or b562) is low-potential and absorbs at about 562 nm, and heme 2 (or BH or b566) is high-potential and absorbs at about 566 nm.</text>
</comment>
<comment type="similarity">
    <text evidence="3 4">Belongs to the cytochrome b family.</text>
</comment>
<comment type="caution">
    <text evidence="2">The full-length protein contains only eight transmembrane helices, not nine as predicted by bioinformatics tools.</text>
</comment>
<organism>
    <name type="scientific">Axis axis</name>
    <name type="common">Axis deer</name>
    <name type="synonym">Chital</name>
    <dbReference type="NCBI Taxonomy" id="30531"/>
    <lineage>
        <taxon>Eukaryota</taxon>
        <taxon>Metazoa</taxon>
        <taxon>Chordata</taxon>
        <taxon>Craniata</taxon>
        <taxon>Vertebrata</taxon>
        <taxon>Euteleostomi</taxon>
        <taxon>Mammalia</taxon>
        <taxon>Eutheria</taxon>
        <taxon>Laurasiatheria</taxon>
        <taxon>Artiodactyla</taxon>
        <taxon>Ruminantia</taxon>
        <taxon>Pecora</taxon>
        <taxon>Cervidae</taxon>
        <taxon>Cervinae</taxon>
        <taxon>Axis</taxon>
    </lineage>
</organism>
<name>CYB_AXIAX</name>
<proteinExistence type="inferred from homology"/>
<keyword id="KW-0249">Electron transport</keyword>
<keyword id="KW-0349">Heme</keyword>
<keyword id="KW-0408">Iron</keyword>
<keyword id="KW-0472">Membrane</keyword>
<keyword id="KW-0479">Metal-binding</keyword>
<keyword id="KW-0496">Mitochondrion</keyword>
<keyword id="KW-0999">Mitochondrion inner membrane</keyword>
<keyword id="KW-0679">Respiratory chain</keyword>
<keyword id="KW-0812">Transmembrane</keyword>
<keyword id="KW-1133">Transmembrane helix</keyword>
<keyword id="KW-0813">Transport</keyword>
<keyword id="KW-0830">Ubiquinone</keyword>
<feature type="chain" id="PRO_0000060655" description="Cytochrome b">
    <location>
        <begin position="1"/>
        <end position="379"/>
    </location>
</feature>
<feature type="transmembrane region" description="Helical" evidence="2">
    <location>
        <begin position="33"/>
        <end position="53"/>
    </location>
</feature>
<feature type="transmembrane region" description="Helical" evidence="2">
    <location>
        <begin position="77"/>
        <end position="98"/>
    </location>
</feature>
<feature type="transmembrane region" description="Helical" evidence="2">
    <location>
        <begin position="113"/>
        <end position="133"/>
    </location>
</feature>
<feature type="transmembrane region" description="Helical" evidence="2">
    <location>
        <begin position="178"/>
        <end position="198"/>
    </location>
</feature>
<feature type="transmembrane region" description="Helical" evidence="2">
    <location>
        <begin position="226"/>
        <end position="246"/>
    </location>
</feature>
<feature type="transmembrane region" description="Helical" evidence="2">
    <location>
        <begin position="288"/>
        <end position="308"/>
    </location>
</feature>
<feature type="transmembrane region" description="Helical" evidence="2">
    <location>
        <begin position="320"/>
        <end position="340"/>
    </location>
</feature>
<feature type="transmembrane region" description="Helical" evidence="2">
    <location>
        <begin position="347"/>
        <end position="367"/>
    </location>
</feature>
<feature type="binding site" description="axial binding residue" evidence="2">
    <location>
        <position position="83"/>
    </location>
    <ligand>
        <name>heme b</name>
        <dbReference type="ChEBI" id="CHEBI:60344"/>
        <label>b562</label>
    </ligand>
    <ligandPart>
        <name>Fe</name>
        <dbReference type="ChEBI" id="CHEBI:18248"/>
    </ligandPart>
</feature>
<feature type="binding site" description="axial binding residue" evidence="2">
    <location>
        <position position="97"/>
    </location>
    <ligand>
        <name>heme b</name>
        <dbReference type="ChEBI" id="CHEBI:60344"/>
        <label>b566</label>
    </ligand>
    <ligandPart>
        <name>Fe</name>
        <dbReference type="ChEBI" id="CHEBI:18248"/>
    </ligandPart>
</feature>
<feature type="binding site" description="axial binding residue" evidence="2">
    <location>
        <position position="182"/>
    </location>
    <ligand>
        <name>heme b</name>
        <dbReference type="ChEBI" id="CHEBI:60344"/>
        <label>b562</label>
    </ligand>
    <ligandPart>
        <name>Fe</name>
        <dbReference type="ChEBI" id="CHEBI:18248"/>
    </ligandPart>
</feature>
<feature type="binding site" description="axial binding residue" evidence="2">
    <location>
        <position position="196"/>
    </location>
    <ligand>
        <name>heme b</name>
        <dbReference type="ChEBI" id="CHEBI:60344"/>
        <label>b566</label>
    </ligand>
    <ligandPart>
        <name>Fe</name>
        <dbReference type="ChEBI" id="CHEBI:18248"/>
    </ligandPart>
</feature>
<feature type="binding site" evidence="2">
    <location>
        <position position="201"/>
    </location>
    <ligand>
        <name>a ubiquinone</name>
        <dbReference type="ChEBI" id="CHEBI:16389"/>
    </ligand>
</feature>
<dbReference type="EMBL" id="AY607040">
    <property type="protein sequence ID" value="AAU08750.1"/>
    <property type="molecule type" value="Genomic_DNA"/>
</dbReference>
<dbReference type="SMR" id="Q5UVI4"/>
<dbReference type="GO" id="GO:0005743">
    <property type="term" value="C:mitochondrial inner membrane"/>
    <property type="evidence" value="ECO:0007669"/>
    <property type="project" value="UniProtKB-SubCell"/>
</dbReference>
<dbReference type="GO" id="GO:0045275">
    <property type="term" value="C:respiratory chain complex III"/>
    <property type="evidence" value="ECO:0007669"/>
    <property type="project" value="InterPro"/>
</dbReference>
<dbReference type="GO" id="GO:0046872">
    <property type="term" value="F:metal ion binding"/>
    <property type="evidence" value="ECO:0007669"/>
    <property type="project" value="UniProtKB-KW"/>
</dbReference>
<dbReference type="GO" id="GO:0008121">
    <property type="term" value="F:ubiquinol-cytochrome-c reductase activity"/>
    <property type="evidence" value="ECO:0007669"/>
    <property type="project" value="InterPro"/>
</dbReference>
<dbReference type="GO" id="GO:0006122">
    <property type="term" value="P:mitochondrial electron transport, ubiquinol to cytochrome c"/>
    <property type="evidence" value="ECO:0007669"/>
    <property type="project" value="TreeGrafter"/>
</dbReference>
<dbReference type="CDD" id="cd00290">
    <property type="entry name" value="cytochrome_b_C"/>
    <property type="match status" value="1"/>
</dbReference>
<dbReference type="CDD" id="cd00284">
    <property type="entry name" value="Cytochrome_b_N"/>
    <property type="match status" value="1"/>
</dbReference>
<dbReference type="FunFam" id="1.20.810.10:FF:000002">
    <property type="entry name" value="Cytochrome b"/>
    <property type="match status" value="1"/>
</dbReference>
<dbReference type="Gene3D" id="1.20.810.10">
    <property type="entry name" value="Cytochrome Bc1 Complex, Chain C"/>
    <property type="match status" value="1"/>
</dbReference>
<dbReference type="InterPro" id="IPR005798">
    <property type="entry name" value="Cyt_b/b6_C"/>
</dbReference>
<dbReference type="InterPro" id="IPR036150">
    <property type="entry name" value="Cyt_b/b6_C_sf"/>
</dbReference>
<dbReference type="InterPro" id="IPR005797">
    <property type="entry name" value="Cyt_b/b6_N"/>
</dbReference>
<dbReference type="InterPro" id="IPR027387">
    <property type="entry name" value="Cytb/b6-like_sf"/>
</dbReference>
<dbReference type="InterPro" id="IPR030689">
    <property type="entry name" value="Cytochrome_b"/>
</dbReference>
<dbReference type="InterPro" id="IPR048260">
    <property type="entry name" value="Cytochrome_b_C_euk/bac"/>
</dbReference>
<dbReference type="InterPro" id="IPR048259">
    <property type="entry name" value="Cytochrome_b_N_euk/bac"/>
</dbReference>
<dbReference type="InterPro" id="IPR016174">
    <property type="entry name" value="Di-haem_cyt_TM"/>
</dbReference>
<dbReference type="PANTHER" id="PTHR19271">
    <property type="entry name" value="CYTOCHROME B"/>
    <property type="match status" value="1"/>
</dbReference>
<dbReference type="PANTHER" id="PTHR19271:SF16">
    <property type="entry name" value="CYTOCHROME B"/>
    <property type="match status" value="1"/>
</dbReference>
<dbReference type="Pfam" id="PF00032">
    <property type="entry name" value="Cytochrom_B_C"/>
    <property type="match status" value="1"/>
</dbReference>
<dbReference type="Pfam" id="PF00033">
    <property type="entry name" value="Cytochrome_B"/>
    <property type="match status" value="1"/>
</dbReference>
<dbReference type="PIRSF" id="PIRSF038885">
    <property type="entry name" value="COB"/>
    <property type="match status" value="1"/>
</dbReference>
<dbReference type="SUPFAM" id="SSF81648">
    <property type="entry name" value="a domain/subunit of cytochrome bc1 complex (Ubiquinol-cytochrome c reductase)"/>
    <property type="match status" value="1"/>
</dbReference>
<dbReference type="SUPFAM" id="SSF81342">
    <property type="entry name" value="Transmembrane di-heme cytochromes"/>
    <property type="match status" value="1"/>
</dbReference>
<dbReference type="PROSITE" id="PS51003">
    <property type="entry name" value="CYTB_CTER"/>
    <property type="match status" value="1"/>
</dbReference>
<dbReference type="PROSITE" id="PS51002">
    <property type="entry name" value="CYTB_NTER"/>
    <property type="match status" value="1"/>
</dbReference>
<reference key="1">
    <citation type="journal article" date="2004" name="Mol. Phylogenet. Evol.">
        <title>Evolution and phylogeny of old world deer.</title>
        <authorList>
            <person name="Pitra C."/>
            <person name="Fickel J."/>
            <person name="Meijaard E."/>
            <person name="Groves P.C."/>
        </authorList>
    </citation>
    <scope>NUCLEOTIDE SEQUENCE [GENOMIC DNA]</scope>
</reference>
<protein>
    <recommendedName>
        <fullName>Cytochrome b</fullName>
    </recommendedName>
    <alternativeName>
        <fullName>Complex III subunit 3</fullName>
    </alternativeName>
    <alternativeName>
        <fullName>Complex III subunit III</fullName>
    </alternativeName>
    <alternativeName>
        <fullName>Cytochrome b-c1 complex subunit 3</fullName>
    </alternativeName>
    <alternativeName>
        <fullName>Ubiquinol-cytochrome-c reductase complex cytochrome b subunit</fullName>
    </alternativeName>
</protein>
<accession>Q5UVI4</accession>
<evidence type="ECO:0000250" key="1"/>
<evidence type="ECO:0000250" key="2">
    <source>
        <dbReference type="UniProtKB" id="P00157"/>
    </source>
</evidence>
<evidence type="ECO:0000255" key="3">
    <source>
        <dbReference type="PROSITE-ProRule" id="PRU00967"/>
    </source>
</evidence>
<evidence type="ECO:0000255" key="4">
    <source>
        <dbReference type="PROSITE-ProRule" id="PRU00968"/>
    </source>
</evidence>
<gene>
    <name type="primary">MT-CYB</name>
    <name type="synonym">COB</name>
    <name type="synonym">CYTB</name>
    <name type="synonym">MTCYB</name>
</gene>
<geneLocation type="mitochondrion"/>
<sequence length="379" mass="42670">MINLGKTSPLMKIVNNAFIDLPAPSNISSWWNFGSLLGVCLILQILTGLFLAMHYTSDTMTAFSSVTHICRDVNYGWIIRYMHANGASMFFICLFLHVGRGLYYGSYTFLETWNIGVILLFTVMATAFVGYVLPWGQMSFWGATVITNLLSAIPYIGTNLVEWIWGGFSVDKATLTRFFAFHFILPFIIAALAMVHLLFLHETGSNNPTGIPSDADKIPFHPYYTIKDTLGIILLIMFLMLLVLFAPDMLGDPDNYTPANPLNTPPHIKPEWYFLFAYAILRSIPNKLGGVLALASSILILILMPLLHTSKQRSMMFRPFSQCLFWILVADLLTLTWIGGQPVEYPFVVIGQLASILYFLIILILMPIISSIENNLLKW</sequence>